<comment type="function">
    <text evidence="1">Catalyzes the conversion of GTP to 2,5-diamino-6-ribosylamino-4(3H)-pyrimidinone 5'-phosphate (DARP), formate and pyrophosphate.</text>
</comment>
<comment type="catalytic activity">
    <reaction evidence="1">
        <text>GTP + 4 H2O = 2,5-diamino-6-hydroxy-4-(5-phosphoribosylamino)-pyrimidine + formate + 2 phosphate + 3 H(+)</text>
        <dbReference type="Rhea" id="RHEA:23704"/>
        <dbReference type="ChEBI" id="CHEBI:15377"/>
        <dbReference type="ChEBI" id="CHEBI:15378"/>
        <dbReference type="ChEBI" id="CHEBI:15740"/>
        <dbReference type="ChEBI" id="CHEBI:37565"/>
        <dbReference type="ChEBI" id="CHEBI:43474"/>
        <dbReference type="ChEBI" id="CHEBI:58614"/>
        <dbReference type="EC" id="3.5.4.25"/>
    </reaction>
</comment>
<comment type="cofactor">
    <cofactor evidence="1">
        <name>Zn(2+)</name>
        <dbReference type="ChEBI" id="CHEBI:29105"/>
    </cofactor>
    <text evidence="1">Binds 1 zinc ion per subunit.</text>
</comment>
<comment type="pathway">
    <text evidence="1">Cofactor biosynthesis; riboflavin biosynthesis; 5-amino-6-(D-ribitylamino)uracil from GTP: step 1/4.</text>
</comment>
<comment type="similarity">
    <text evidence="1">Belongs to the GTP cyclohydrolase II family.</text>
</comment>
<keyword id="KW-0342">GTP-binding</keyword>
<keyword id="KW-0378">Hydrolase</keyword>
<keyword id="KW-0479">Metal-binding</keyword>
<keyword id="KW-0547">Nucleotide-binding</keyword>
<keyword id="KW-0686">Riboflavin biosynthesis</keyword>
<keyword id="KW-0862">Zinc</keyword>
<evidence type="ECO:0000255" key="1">
    <source>
        <dbReference type="HAMAP-Rule" id="MF_00179"/>
    </source>
</evidence>
<proteinExistence type="inferred from homology"/>
<dbReference type="EC" id="3.5.4.25" evidence="1"/>
<dbReference type="EMBL" id="AL157959">
    <property type="protein sequence ID" value="CAM08588.1"/>
    <property type="molecule type" value="Genomic_DNA"/>
</dbReference>
<dbReference type="RefSeq" id="WP_010981192.1">
    <property type="nucleotide sequence ID" value="NC_003116.1"/>
</dbReference>
<dbReference type="SMR" id="Q9JU99"/>
<dbReference type="EnsemblBacteria" id="CAM08588">
    <property type="protein sequence ID" value="CAM08588"/>
    <property type="gene ID" value="NMA1425"/>
</dbReference>
<dbReference type="KEGG" id="nma:NMA1425"/>
<dbReference type="HOGENOM" id="CLU_020273_2_1_4"/>
<dbReference type="UniPathway" id="UPA00275">
    <property type="reaction ID" value="UER00400"/>
</dbReference>
<dbReference type="Proteomes" id="UP000000626">
    <property type="component" value="Chromosome"/>
</dbReference>
<dbReference type="GO" id="GO:0005829">
    <property type="term" value="C:cytosol"/>
    <property type="evidence" value="ECO:0007669"/>
    <property type="project" value="TreeGrafter"/>
</dbReference>
<dbReference type="GO" id="GO:0005525">
    <property type="term" value="F:GTP binding"/>
    <property type="evidence" value="ECO:0007669"/>
    <property type="project" value="UniProtKB-KW"/>
</dbReference>
<dbReference type="GO" id="GO:0003935">
    <property type="term" value="F:GTP cyclohydrolase II activity"/>
    <property type="evidence" value="ECO:0007669"/>
    <property type="project" value="UniProtKB-UniRule"/>
</dbReference>
<dbReference type="GO" id="GO:0008270">
    <property type="term" value="F:zinc ion binding"/>
    <property type="evidence" value="ECO:0007669"/>
    <property type="project" value="UniProtKB-UniRule"/>
</dbReference>
<dbReference type="GO" id="GO:0009231">
    <property type="term" value="P:riboflavin biosynthetic process"/>
    <property type="evidence" value="ECO:0007669"/>
    <property type="project" value="UniProtKB-UniRule"/>
</dbReference>
<dbReference type="CDD" id="cd00641">
    <property type="entry name" value="GTP_cyclohydro2"/>
    <property type="match status" value="1"/>
</dbReference>
<dbReference type="FunFam" id="3.40.50.10990:FF:000002">
    <property type="entry name" value="GTP cyclohydrolase-2"/>
    <property type="match status" value="1"/>
</dbReference>
<dbReference type="Gene3D" id="3.40.50.10990">
    <property type="entry name" value="GTP cyclohydrolase II"/>
    <property type="match status" value="1"/>
</dbReference>
<dbReference type="HAMAP" id="MF_00179">
    <property type="entry name" value="RibA"/>
    <property type="match status" value="1"/>
</dbReference>
<dbReference type="InterPro" id="IPR032677">
    <property type="entry name" value="GTP_cyclohydro_II"/>
</dbReference>
<dbReference type="InterPro" id="IPR000926">
    <property type="entry name" value="RibA"/>
</dbReference>
<dbReference type="InterPro" id="IPR036144">
    <property type="entry name" value="RibA-like_sf"/>
</dbReference>
<dbReference type="NCBIfam" id="NF001591">
    <property type="entry name" value="PRK00393.1"/>
    <property type="match status" value="1"/>
</dbReference>
<dbReference type="NCBIfam" id="TIGR00505">
    <property type="entry name" value="ribA"/>
    <property type="match status" value="1"/>
</dbReference>
<dbReference type="PANTHER" id="PTHR21327:SF18">
    <property type="entry name" value="3,4-DIHYDROXY-2-BUTANONE 4-PHOSPHATE SYNTHASE"/>
    <property type="match status" value="1"/>
</dbReference>
<dbReference type="PANTHER" id="PTHR21327">
    <property type="entry name" value="GTP CYCLOHYDROLASE II-RELATED"/>
    <property type="match status" value="1"/>
</dbReference>
<dbReference type="Pfam" id="PF00925">
    <property type="entry name" value="GTP_cyclohydro2"/>
    <property type="match status" value="1"/>
</dbReference>
<dbReference type="SUPFAM" id="SSF142695">
    <property type="entry name" value="RibA-like"/>
    <property type="match status" value="1"/>
</dbReference>
<sequence length="197" mass="21738">MSELLNYVASCRLPTEWGVFTMHGFEEAGGQEHVALTVGDCSDGNPVLTRIHSECLTGDALFSKKCDCGPQLEAAMKAVQAEGRGIIVYLRQEGRGIGLINKIRAYHLQDQGMDTVEANVALGLPVDARDFRLAQSIYEYLGIRSVKLLTNNPEKIQTLKDAGINVVERIPLHVGENLENKRYLQTKADKLGHLMSE</sequence>
<organism>
    <name type="scientific">Neisseria meningitidis serogroup A / serotype 4A (strain DSM 15465 / Z2491)</name>
    <dbReference type="NCBI Taxonomy" id="122587"/>
    <lineage>
        <taxon>Bacteria</taxon>
        <taxon>Pseudomonadati</taxon>
        <taxon>Pseudomonadota</taxon>
        <taxon>Betaproteobacteria</taxon>
        <taxon>Neisseriales</taxon>
        <taxon>Neisseriaceae</taxon>
        <taxon>Neisseria</taxon>
    </lineage>
</organism>
<reference key="1">
    <citation type="journal article" date="2000" name="Nature">
        <title>Complete DNA sequence of a serogroup A strain of Neisseria meningitidis Z2491.</title>
        <authorList>
            <person name="Parkhill J."/>
            <person name="Achtman M."/>
            <person name="James K.D."/>
            <person name="Bentley S.D."/>
            <person name="Churcher C.M."/>
            <person name="Klee S.R."/>
            <person name="Morelli G."/>
            <person name="Basham D."/>
            <person name="Brown D."/>
            <person name="Chillingworth T."/>
            <person name="Davies R.M."/>
            <person name="Davis P."/>
            <person name="Devlin K."/>
            <person name="Feltwell T."/>
            <person name="Hamlin N."/>
            <person name="Holroyd S."/>
            <person name="Jagels K."/>
            <person name="Leather S."/>
            <person name="Moule S."/>
            <person name="Mungall K.L."/>
            <person name="Quail M.A."/>
            <person name="Rajandream M.A."/>
            <person name="Rutherford K.M."/>
            <person name="Simmonds M."/>
            <person name="Skelton J."/>
            <person name="Whitehead S."/>
            <person name="Spratt B.G."/>
            <person name="Barrell B.G."/>
        </authorList>
    </citation>
    <scope>NUCLEOTIDE SEQUENCE [LARGE SCALE GENOMIC DNA]</scope>
    <source>
        <strain>DSM 15465 / Z2491</strain>
    </source>
</reference>
<protein>
    <recommendedName>
        <fullName evidence="1">GTP cyclohydrolase-2</fullName>
        <ecNumber evidence="1">3.5.4.25</ecNumber>
    </recommendedName>
    <alternativeName>
        <fullName evidence="1">GTP cyclohydrolase II</fullName>
    </alternativeName>
</protein>
<accession>Q9JU99</accession>
<accession>A1IS38</accession>
<feature type="chain" id="PRO_0000151764" description="GTP cyclohydrolase-2">
    <location>
        <begin position="1"/>
        <end position="197"/>
    </location>
</feature>
<feature type="active site" description="Proton acceptor" evidence="1">
    <location>
        <position position="127"/>
    </location>
</feature>
<feature type="active site" description="Nucleophile" evidence="1">
    <location>
        <position position="129"/>
    </location>
</feature>
<feature type="binding site" evidence="1">
    <location>
        <begin position="50"/>
        <end position="54"/>
    </location>
    <ligand>
        <name>GTP</name>
        <dbReference type="ChEBI" id="CHEBI:37565"/>
    </ligand>
</feature>
<feature type="binding site" evidence="1">
    <location>
        <position position="55"/>
    </location>
    <ligand>
        <name>Zn(2+)</name>
        <dbReference type="ChEBI" id="CHEBI:29105"/>
        <note>catalytic</note>
    </ligand>
</feature>
<feature type="binding site" evidence="1">
    <location>
        <position position="66"/>
    </location>
    <ligand>
        <name>Zn(2+)</name>
        <dbReference type="ChEBI" id="CHEBI:29105"/>
        <note>catalytic</note>
    </ligand>
</feature>
<feature type="binding site" evidence="1">
    <location>
        <position position="68"/>
    </location>
    <ligand>
        <name>Zn(2+)</name>
        <dbReference type="ChEBI" id="CHEBI:29105"/>
        <note>catalytic</note>
    </ligand>
</feature>
<feature type="binding site" evidence="1">
    <location>
        <position position="71"/>
    </location>
    <ligand>
        <name>GTP</name>
        <dbReference type="ChEBI" id="CHEBI:37565"/>
    </ligand>
</feature>
<feature type="binding site" evidence="1">
    <location>
        <begin position="93"/>
        <end position="95"/>
    </location>
    <ligand>
        <name>GTP</name>
        <dbReference type="ChEBI" id="CHEBI:37565"/>
    </ligand>
</feature>
<feature type="binding site" evidence="1">
    <location>
        <position position="115"/>
    </location>
    <ligand>
        <name>GTP</name>
        <dbReference type="ChEBI" id="CHEBI:37565"/>
    </ligand>
</feature>
<feature type="binding site" evidence="1">
    <location>
        <position position="150"/>
    </location>
    <ligand>
        <name>GTP</name>
        <dbReference type="ChEBI" id="CHEBI:37565"/>
    </ligand>
</feature>
<feature type="binding site" evidence="1">
    <location>
        <position position="155"/>
    </location>
    <ligand>
        <name>GTP</name>
        <dbReference type="ChEBI" id="CHEBI:37565"/>
    </ligand>
</feature>
<gene>
    <name evidence="1" type="primary">ribA</name>
    <name type="ordered locus">NMA1425</name>
</gene>
<name>RIBA_NEIMA</name>